<feature type="chain" id="PRO_0000217315" description="Uncharacterized protein ycf18">
    <location>
        <begin position="1"/>
        <end position="57"/>
    </location>
</feature>
<dbReference type="EMBL" id="L19263">
    <property type="status" value="NOT_ANNOTATED_CDS"/>
    <property type="molecule type" value="Genomic_DNA"/>
</dbReference>
<dbReference type="SMR" id="P48446"/>
<dbReference type="GO" id="GO:0009507">
    <property type="term" value="C:chloroplast"/>
    <property type="evidence" value="ECO:0007669"/>
    <property type="project" value="UniProtKB-SubCell"/>
</dbReference>
<dbReference type="Gene3D" id="1.10.287.670">
    <property type="entry name" value="Phycobilisome degradation protein NblA"/>
    <property type="match status" value="1"/>
</dbReference>
<dbReference type="InterPro" id="IPR007574">
    <property type="entry name" value="NblA"/>
</dbReference>
<dbReference type="InterPro" id="IPR036904">
    <property type="entry name" value="NblA_sf"/>
</dbReference>
<dbReference type="Pfam" id="PF04485">
    <property type="entry name" value="NblA"/>
    <property type="match status" value="1"/>
</dbReference>
<dbReference type="SUPFAM" id="SSF109859">
    <property type="entry name" value="NblA-like"/>
    <property type="match status" value="1"/>
</dbReference>
<name>YCF18_AGLNE</name>
<proteinExistence type="inferred from homology"/>
<accession>P48446</accession>
<evidence type="ECO:0000305" key="1"/>
<reference key="1">
    <citation type="journal article" date="1993" name="J. Phycol.">
        <title>The phycobilisome b18 subunit gene of allophycocyanin is located on the plastid genome in Aglaothamnion neglectum (Rhodophyta) and cotranscribed with an unidentified open reading frame.</title>
        <authorList>
            <person name="Apt K.E."/>
            <person name="Grossman A.R."/>
        </authorList>
    </citation>
    <scope>NUCLEOTIDE SEQUENCE [GENOMIC DNA]</scope>
</reference>
<organism>
    <name type="scientific">Aglaothamnion neglectum</name>
    <name type="common">Red alga</name>
    <dbReference type="NCBI Taxonomy" id="2765"/>
    <lineage>
        <taxon>Eukaryota</taxon>
        <taxon>Rhodophyta</taxon>
        <taxon>Florideophyceae</taxon>
        <taxon>Rhodymeniophycidae</taxon>
        <taxon>Ceramiales</taxon>
        <taxon>Callithamniaceae</taxon>
        <taxon>Aglaothamnion</taxon>
    </lineage>
</organism>
<sequence>MDQTNLLTLEQELKLAIYKQKIYTLNVYNMKQHLRDILKQMMIKENTIKYFIKNSIT</sequence>
<comment type="subcellular location">
    <subcellularLocation>
        <location>Plastid</location>
        <location>Chloroplast</location>
    </subcellularLocation>
</comment>
<comment type="similarity">
    <text evidence="1">Belongs to the ycf18/nblA family.</text>
</comment>
<keyword id="KW-0150">Chloroplast</keyword>
<keyword id="KW-0934">Plastid</keyword>
<protein>
    <recommendedName>
        <fullName>Uncharacterized protein ycf18</fullName>
    </recommendedName>
</protein>
<geneLocation type="chloroplast"/>
<gene>
    <name type="primary">ycf18</name>
</gene>